<dbReference type="EC" id="2.4.2.29" evidence="1"/>
<dbReference type="EMBL" id="CP000976">
    <property type="protein sequence ID" value="ACH93739.1"/>
    <property type="molecule type" value="Genomic_DNA"/>
</dbReference>
<dbReference type="RefSeq" id="WP_012538548.1">
    <property type="nucleotide sequence ID" value="NC_011229.1"/>
</dbReference>
<dbReference type="SMR" id="B5RN03"/>
<dbReference type="STRING" id="412419.BDU_817"/>
<dbReference type="KEGG" id="bdu:BDU_817"/>
<dbReference type="eggNOG" id="COG0343">
    <property type="taxonomic scope" value="Bacteria"/>
</dbReference>
<dbReference type="HOGENOM" id="CLU_022060_0_1_12"/>
<dbReference type="OrthoDB" id="9805417at2"/>
<dbReference type="UniPathway" id="UPA00392"/>
<dbReference type="Proteomes" id="UP000000611">
    <property type="component" value="Chromosome"/>
</dbReference>
<dbReference type="GO" id="GO:0005829">
    <property type="term" value="C:cytosol"/>
    <property type="evidence" value="ECO:0007669"/>
    <property type="project" value="TreeGrafter"/>
</dbReference>
<dbReference type="GO" id="GO:0046872">
    <property type="term" value="F:metal ion binding"/>
    <property type="evidence" value="ECO:0007669"/>
    <property type="project" value="UniProtKB-KW"/>
</dbReference>
<dbReference type="GO" id="GO:0008479">
    <property type="term" value="F:tRNA-guanosine(34) queuine transglycosylase activity"/>
    <property type="evidence" value="ECO:0007669"/>
    <property type="project" value="UniProtKB-UniRule"/>
</dbReference>
<dbReference type="GO" id="GO:0008616">
    <property type="term" value="P:queuosine biosynthetic process"/>
    <property type="evidence" value="ECO:0007669"/>
    <property type="project" value="UniProtKB-UniRule"/>
</dbReference>
<dbReference type="GO" id="GO:0002099">
    <property type="term" value="P:tRNA wobble guanine modification"/>
    <property type="evidence" value="ECO:0007669"/>
    <property type="project" value="TreeGrafter"/>
</dbReference>
<dbReference type="GO" id="GO:0101030">
    <property type="term" value="P:tRNA-guanine transglycosylation"/>
    <property type="evidence" value="ECO:0007669"/>
    <property type="project" value="InterPro"/>
</dbReference>
<dbReference type="Gene3D" id="3.20.20.105">
    <property type="entry name" value="Queuine tRNA-ribosyltransferase-like"/>
    <property type="match status" value="1"/>
</dbReference>
<dbReference type="HAMAP" id="MF_00168">
    <property type="entry name" value="Q_tRNA_Tgt"/>
    <property type="match status" value="1"/>
</dbReference>
<dbReference type="InterPro" id="IPR050076">
    <property type="entry name" value="ArchSynthase1/Queuine_TRR"/>
</dbReference>
<dbReference type="InterPro" id="IPR004803">
    <property type="entry name" value="TGT"/>
</dbReference>
<dbReference type="InterPro" id="IPR036511">
    <property type="entry name" value="TGT-like_sf"/>
</dbReference>
<dbReference type="InterPro" id="IPR002616">
    <property type="entry name" value="tRNA_ribo_trans-like"/>
</dbReference>
<dbReference type="NCBIfam" id="TIGR00430">
    <property type="entry name" value="Q_tRNA_tgt"/>
    <property type="match status" value="1"/>
</dbReference>
<dbReference type="NCBIfam" id="TIGR00449">
    <property type="entry name" value="tgt_general"/>
    <property type="match status" value="1"/>
</dbReference>
<dbReference type="PANTHER" id="PTHR46499">
    <property type="entry name" value="QUEUINE TRNA-RIBOSYLTRANSFERASE"/>
    <property type="match status" value="1"/>
</dbReference>
<dbReference type="PANTHER" id="PTHR46499:SF1">
    <property type="entry name" value="QUEUINE TRNA-RIBOSYLTRANSFERASE"/>
    <property type="match status" value="1"/>
</dbReference>
<dbReference type="Pfam" id="PF01702">
    <property type="entry name" value="TGT"/>
    <property type="match status" value="1"/>
</dbReference>
<dbReference type="SUPFAM" id="SSF51713">
    <property type="entry name" value="tRNA-guanine transglycosylase"/>
    <property type="match status" value="1"/>
</dbReference>
<keyword id="KW-0328">Glycosyltransferase</keyword>
<keyword id="KW-0479">Metal-binding</keyword>
<keyword id="KW-0671">Queuosine biosynthesis</keyword>
<keyword id="KW-0808">Transferase</keyword>
<keyword id="KW-0819">tRNA processing</keyword>
<keyword id="KW-0862">Zinc</keyword>
<sequence>MFNIIKNDKNSNARLGILELPHGNVATPCFMPVGTLGVMKALKHDVLEKLGCDLMLANTYHLYLRPGIDVIKKYGNLHNFTTWNKNFLTDSGGFQVFSLSNFRKIEDEGVDFKSHIDGSRHYFTPESVFSMQETFESDIIMALDICSPYGIDYDEASLYTNITTSWARRTLCAYKNRKEGYEGLLFLITQGNFFKDLRKRSTESILELNSPGIAIGGISVGEPRDRYLEILEYNSSLIPKDKPKYVMGIGTPHYILDAIYNGIDIFDCVNPTRIARHGSLLTDNGILRINRAEFRFDTCSVERECSCTLCTRYSRGYLRHLFKSEEALGVMLASEHNIHYMFRLINKAKNAIMNDNFVKFRKLYLDKYDEGNLNE</sequence>
<reference key="1">
    <citation type="journal article" date="2008" name="PLoS Genet.">
        <title>The genome of Borrelia recurrentis, the agent of deadly louse-borne relapsing fever, is a degraded subset of tick-borne Borrelia duttonii.</title>
        <authorList>
            <person name="Lescot M."/>
            <person name="Audic S."/>
            <person name="Robert C."/>
            <person name="Nguyen T.T."/>
            <person name="Blanc G."/>
            <person name="Cutler S.J."/>
            <person name="Wincker P."/>
            <person name="Couloux A."/>
            <person name="Claverie J.-M."/>
            <person name="Raoult D."/>
            <person name="Drancourt M."/>
        </authorList>
    </citation>
    <scope>NUCLEOTIDE SEQUENCE [LARGE SCALE GENOMIC DNA]</scope>
    <source>
        <strain>Ly</strain>
    </source>
</reference>
<gene>
    <name evidence="1" type="primary">tgt</name>
    <name type="ordered locus">BDU_817</name>
</gene>
<proteinExistence type="inferred from homology"/>
<name>TGT_BORDL</name>
<protein>
    <recommendedName>
        <fullName evidence="1">Queuine tRNA-ribosyltransferase</fullName>
        <ecNumber evidence="1">2.4.2.29</ecNumber>
    </recommendedName>
    <alternativeName>
        <fullName evidence="1">Guanine insertion enzyme</fullName>
    </alternativeName>
    <alternativeName>
        <fullName evidence="1">tRNA-guanine transglycosylase</fullName>
    </alternativeName>
</protein>
<comment type="function">
    <text evidence="1">Catalyzes the base-exchange of a guanine (G) residue with the queuine precursor 7-aminomethyl-7-deazaguanine (PreQ1) at position 34 (anticodon wobble position) in tRNAs with GU(N) anticodons (tRNA-Asp, -Asn, -His and -Tyr). Catalysis occurs through a double-displacement mechanism. The nucleophile active site attacks the C1' of nucleotide 34 to detach the guanine base from the RNA, forming a covalent enzyme-RNA intermediate. The proton acceptor active site deprotonates the incoming PreQ1, allowing a nucleophilic attack on the C1' of the ribose to form the product. After dissociation, two additional enzymatic reactions on the tRNA convert PreQ1 to queuine (Q), resulting in the hypermodified nucleoside queuosine (7-(((4,5-cis-dihydroxy-2-cyclopenten-1-yl)amino)methyl)-7-deazaguanosine).</text>
</comment>
<comment type="catalytic activity">
    <reaction evidence="1">
        <text>7-aminomethyl-7-carbaguanine + guanosine(34) in tRNA = 7-aminomethyl-7-carbaguanosine(34) in tRNA + guanine</text>
        <dbReference type="Rhea" id="RHEA:24104"/>
        <dbReference type="Rhea" id="RHEA-COMP:10341"/>
        <dbReference type="Rhea" id="RHEA-COMP:10342"/>
        <dbReference type="ChEBI" id="CHEBI:16235"/>
        <dbReference type="ChEBI" id="CHEBI:58703"/>
        <dbReference type="ChEBI" id="CHEBI:74269"/>
        <dbReference type="ChEBI" id="CHEBI:82833"/>
        <dbReference type="EC" id="2.4.2.29"/>
    </reaction>
</comment>
<comment type="cofactor">
    <cofactor evidence="1">
        <name>Zn(2+)</name>
        <dbReference type="ChEBI" id="CHEBI:29105"/>
    </cofactor>
    <text evidence="1">Binds 1 zinc ion per subunit.</text>
</comment>
<comment type="pathway">
    <text evidence="1">tRNA modification; tRNA-queuosine biosynthesis.</text>
</comment>
<comment type="subunit">
    <text evidence="1">Homodimer. Within each dimer, one monomer is responsible for RNA recognition and catalysis, while the other monomer binds to the replacement base PreQ1.</text>
</comment>
<comment type="similarity">
    <text evidence="1">Belongs to the queuine tRNA-ribosyltransferase family.</text>
</comment>
<organism>
    <name type="scientific">Borrelia duttonii (strain Ly)</name>
    <dbReference type="NCBI Taxonomy" id="412419"/>
    <lineage>
        <taxon>Bacteria</taxon>
        <taxon>Pseudomonadati</taxon>
        <taxon>Spirochaetota</taxon>
        <taxon>Spirochaetia</taxon>
        <taxon>Spirochaetales</taxon>
        <taxon>Borreliaceae</taxon>
        <taxon>Borrelia</taxon>
    </lineage>
</organism>
<accession>B5RN03</accession>
<feature type="chain" id="PRO_1000097531" description="Queuine tRNA-ribosyltransferase">
    <location>
        <begin position="1"/>
        <end position="375"/>
    </location>
</feature>
<feature type="region of interest" description="RNA binding" evidence="1">
    <location>
        <begin position="248"/>
        <end position="254"/>
    </location>
</feature>
<feature type="region of interest" description="RNA binding; important for wobble base 34 recognition" evidence="1">
    <location>
        <begin position="272"/>
        <end position="276"/>
    </location>
</feature>
<feature type="active site" description="Proton acceptor" evidence="1">
    <location>
        <position position="90"/>
    </location>
</feature>
<feature type="active site" description="Nucleophile" evidence="1">
    <location>
        <position position="267"/>
    </location>
</feature>
<feature type="binding site" evidence="1">
    <location>
        <begin position="90"/>
        <end position="94"/>
    </location>
    <ligand>
        <name>substrate</name>
    </ligand>
</feature>
<feature type="binding site" evidence="1">
    <location>
        <position position="144"/>
    </location>
    <ligand>
        <name>substrate</name>
    </ligand>
</feature>
<feature type="binding site" evidence="1">
    <location>
        <position position="190"/>
    </location>
    <ligand>
        <name>substrate</name>
    </ligand>
</feature>
<feature type="binding site" evidence="1">
    <location>
        <position position="217"/>
    </location>
    <ligand>
        <name>substrate</name>
    </ligand>
</feature>
<feature type="binding site" evidence="1">
    <location>
        <position position="305"/>
    </location>
    <ligand>
        <name>Zn(2+)</name>
        <dbReference type="ChEBI" id="CHEBI:29105"/>
    </ligand>
</feature>
<feature type="binding site" evidence="1">
    <location>
        <position position="307"/>
    </location>
    <ligand>
        <name>Zn(2+)</name>
        <dbReference type="ChEBI" id="CHEBI:29105"/>
    </ligand>
</feature>
<feature type="binding site" evidence="1">
    <location>
        <position position="310"/>
    </location>
    <ligand>
        <name>Zn(2+)</name>
        <dbReference type="ChEBI" id="CHEBI:29105"/>
    </ligand>
</feature>
<feature type="binding site" evidence="1">
    <location>
        <position position="336"/>
    </location>
    <ligand>
        <name>Zn(2+)</name>
        <dbReference type="ChEBI" id="CHEBI:29105"/>
    </ligand>
</feature>
<evidence type="ECO:0000255" key="1">
    <source>
        <dbReference type="HAMAP-Rule" id="MF_00168"/>
    </source>
</evidence>